<dbReference type="EC" id="2.4.2.10" evidence="1"/>
<dbReference type="EMBL" id="AE017126">
    <property type="protein sequence ID" value="AAP99353.1"/>
    <property type="molecule type" value="Genomic_DNA"/>
</dbReference>
<dbReference type="RefSeq" id="NP_874701.1">
    <property type="nucleotide sequence ID" value="NC_005042.1"/>
</dbReference>
<dbReference type="RefSeq" id="WP_011124462.1">
    <property type="nucleotide sequence ID" value="NC_005042.1"/>
</dbReference>
<dbReference type="SMR" id="Q7VDR1"/>
<dbReference type="STRING" id="167539.Pro_0307"/>
<dbReference type="EnsemblBacteria" id="AAP99353">
    <property type="protein sequence ID" value="AAP99353"/>
    <property type="gene ID" value="Pro_0307"/>
</dbReference>
<dbReference type="KEGG" id="pma:Pro_0307"/>
<dbReference type="PATRIC" id="fig|167539.5.peg.316"/>
<dbReference type="eggNOG" id="COG0461">
    <property type="taxonomic scope" value="Bacteria"/>
</dbReference>
<dbReference type="HOGENOM" id="CLU_074878_2_1_3"/>
<dbReference type="OrthoDB" id="9785917at2"/>
<dbReference type="UniPathway" id="UPA00070">
    <property type="reaction ID" value="UER00119"/>
</dbReference>
<dbReference type="Proteomes" id="UP000001420">
    <property type="component" value="Chromosome"/>
</dbReference>
<dbReference type="GO" id="GO:0000287">
    <property type="term" value="F:magnesium ion binding"/>
    <property type="evidence" value="ECO:0007669"/>
    <property type="project" value="UniProtKB-UniRule"/>
</dbReference>
<dbReference type="GO" id="GO:0004588">
    <property type="term" value="F:orotate phosphoribosyltransferase activity"/>
    <property type="evidence" value="ECO:0007669"/>
    <property type="project" value="UniProtKB-UniRule"/>
</dbReference>
<dbReference type="GO" id="GO:0044205">
    <property type="term" value="P:'de novo' UMP biosynthetic process"/>
    <property type="evidence" value="ECO:0007669"/>
    <property type="project" value="UniProtKB-UniRule"/>
</dbReference>
<dbReference type="GO" id="GO:0019856">
    <property type="term" value="P:pyrimidine nucleobase biosynthetic process"/>
    <property type="evidence" value="ECO:0007669"/>
    <property type="project" value="TreeGrafter"/>
</dbReference>
<dbReference type="CDD" id="cd06223">
    <property type="entry name" value="PRTases_typeI"/>
    <property type="match status" value="1"/>
</dbReference>
<dbReference type="Gene3D" id="3.40.50.2020">
    <property type="match status" value="1"/>
</dbReference>
<dbReference type="HAMAP" id="MF_01208">
    <property type="entry name" value="PyrE"/>
    <property type="match status" value="1"/>
</dbReference>
<dbReference type="InterPro" id="IPR023031">
    <property type="entry name" value="OPRT"/>
</dbReference>
<dbReference type="InterPro" id="IPR004467">
    <property type="entry name" value="Or_phspho_trans_dom"/>
</dbReference>
<dbReference type="InterPro" id="IPR000836">
    <property type="entry name" value="PRibTrfase_dom"/>
</dbReference>
<dbReference type="InterPro" id="IPR029057">
    <property type="entry name" value="PRTase-like"/>
</dbReference>
<dbReference type="NCBIfam" id="TIGR00336">
    <property type="entry name" value="pyrE"/>
    <property type="match status" value="1"/>
</dbReference>
<dbReference type="PANTHER" id="PTHR19278">
    <property type="entry name" value="OROTATE PHOSPHORIBOSYLTRANSFERASE"/>
    <property type="match status" value="1"/>
</dbReference>
<dbReference type="PANTHER" id="PTHR19278:SF9">
    <property type="entry name" value="URIDINE 5'-MONOPHOSPHATE SYNTHASE"/>
    <property type="match status" value="1"/>
</dbReference>
<dbReference type="SUPFAM" id="SSF53271">
    <property type="entry name" value="PRTase-like"/>
    <property type="match status" value="1"/>
</dbReference>
<keyword id="KW-0328">Glycosyltransferase</keyword>
<keyword id="KW-0460">Magnesium</keyword>
<keyword id="KW-0665">Pyrimidine biosynthesis</keyword>
<keyword id="KW-1185">Reference proteome</keyword>
<keyword id="KW-0808">Transferase</keyword>
<evidence type="ECO:0000255" key="1">
    <source>
        <dbReference type="HAMAP-Rule" id="MF_01208"/>
    </source>
</evidence>
<proteinExistence type="inferred from homology"/>
<name>PYRE_PROMA</name>
<gene>
    <name evidence="1" type="primary">pyrE</name>
    <name type="ordered locus">Pro_0307</name>
</gene>
<accession>Q7VDR1</accession>
<reference key="1">
    <citation type="journal article" date="2003" name="Proc. Natl. Acad. Sci. U.S.A.">
        <title>Genome sequence of the cyanobacterium Prochlorococcus marinus SS120, a nearly minimal oxyphototrophic genome.</title>
        <authorList>
            <person name="Dufresne A."/>
            <person name="Salanoubat M."/>
            <person name="Partensky F."/>
            <person name="Artiguenave F."/>
            <person name="Axmann I.M."/>
            <person name="Barbe V."/>
            <person name="Duprat S."/>
            <person name="Galperin M.Y."/>
            <person name="Koonin E.V."/>
            <person name="Le Gall F."/>
            <person name="Makarova K.S."/>
            <person name="Ostrowski M."/>
            <person name="Oztas S."/>
            <person name="Robert C."/>
            <person name="Rogozin I.B."/>
            <person name="Scanlan D.J."/>
            <person name="Tandeau de Marsac N."/>
            <person name="Weissenbach J."/>
            <person name="Wincker P."/>
            <person name="Wolf Y.I."/>
            <person name="Hess W.R."/>
        </authorList>
    </citation>
    <scope>NUCLEOTIDE SEQUENCE [LARGE SCALE GENOMIC DNA]</scope>
    <source>
        <strain>SARG / CCMP1375 / SS120</strain>
    </source>
</reference>
<sequence>MNLPIKSNAASKEKLLTLLALKAYKNGNFTLSSGNKSNHYVNCKPVSLSGNGLLLLSNMMLENVEPDSLAVAGLTLGADPLVCGVALAATYAGRKLDALIVRKEPKGYGTASWLEGPLPPAGSVITVLEDVVTTGRSSLKAVNQLQNAGYRVNRIISIVDRQEGGAFEIKKAGLDLVSLFVLDEVYEKFKNT</sequence>
<protein>
    <recommendedName>
        <fullName evidence="1">Orotate phosphoribosyltransferase</fullName>
        <shortName evidence="1">OPRT</shortName>
        <shortName evidence="1">OPRTase</shortName>
        <ecNumber evidence="1">2.4.2.10</ecNumber>
    </recommendedName>
</protein>
<comment type="function">
    <text evidence="1">Catalyzes the transfer of a ribosyl phosphate group from 5-phosphoribose 1-diphosphate to orotate, leading to the formation of orotidine monophosphate (OMP).</text>
</comment>
<comment type="catalytic activity">
    <reaction evidence="1">
        <text>orotidine 5'-phosphate + diphosphate = orotate + 5-phospho-alpha-D-ribose 1-diphosphate</text>
        <dbReference type="Rhea" id="RHEA:10380"/>
        <dbReference type="ChEBI" id="CHEBI:30839"/>
        <dbReference type="ChEBI" id="CHEBI:33019"/>
        <dbReference type="ChEBI" id="CHEBI:57538"/>
        <dbReference type="ChEBI" id="CHEBI:58017"/>
        <dbReference type="EC" id="2.4.2.10"/>
    </reaction>
</comment>
<comment type="cofactor">
    <cofactor evidence="1">
        <name>Mg(2+)</name>
        <dbReference type="ChEBI" id="CHEBI:18420"/>
    </cofactor>
</comment>
<comment type="pathway">
    <text evidence="1">Pyrimidine metabolism; UMP biosynthesis via de novo pathway; UMP from orotate: step 1/2.</text>
</comment>
<comment type="subunit">
    <text evidence="1">Homodimer.</text>
</comment>
<comment type="similarity">
    <text evidence="1">Belongs to the purine/pyrimidine phosphoribosyltransferase family. PyrE subfamily.</text>
</comment>
<feature type="chain" id="PRO_1000066269" description="Orotate phosphoribosyltransferase">
    <location>
        <begin position="1"/>
        <end position="192"/>
    </location>
</feature>
<feature type="binding site" evidence="1">
    <location>
        <position position="102"/>
    </location>
    <ligand>
        <name>5-phospho-alpha-D-ribose 1-diphosphate</name>
        <dbReference type="ChEBI" id="CHEBI:58017"/>
        <note>ligand shared between dimeric partners</note>
    </ligand>
</feature>
<feature type="binding site" description="in other chain" evidence="1">
    <location>
        <position position="103"/>
    </location>
    <ligand>
        <name>5-phospho-alpha-D-ribose 1-diphosphate</name>
        <dbReference type="ChEBI" id="CHEBI:58017"/>
        <note>ligand shared between dimeric partners</note>
    </ligand>
</feature>
<feature type="binding site" evidence="1">
    <location>
        <position position="106"/>
    </location>
    <ligand>
        <name>5-phospho-alpha-D-ribose 1-diphosphate</name>
        <dbReference type="ChEBI" id="CHEBI:58017"/>
        <note>ligand shared between dimeric partners</note>
    </ligand>
</feature>
<feature type="binding site" description="in other chain" evidence="1">
    <location>
        <begin position="129"/>
        <end position="137"/>
    </location>
    <ligand>
        <name>5-phospho-alpha-D-ribose 1-diphosphate</name>
        <dbReference type="ChEBI" id="CHEBI:58017"/>
        <note>ligand shared between dimeric partners</note>
    </ligand>
</feature>
<feature type="binding site" evidence="1">
    <location>
        <position position="133"/>
    </location>
    <ligand>
        <name>orotate</name>
        <dbReference type="ChEBI" id="CHEBI:30839"/>
    </ligand>
</feature>
<feature type="binding site" evidence="1">
    <location>
        <position position="161"/>
    </location>
    <ligand>
        <name>orotate</name>
        <dbReference type="ChEBI" id="CHEBI:30839"/>
    </ligand>
</feature>
<organism>
    <name type="scientific">Prochlorococcus marinus (strain SARG / CCMP1375 / SS120)</name>
    <dbReference type="NCBI Taxonomy" id="167539"/>
    <lineage>
        <taxon>Bacteria</taxon>
        <taxon>Bacillati</taxon>
        <taxon>Cyanobacteriota</taxon>
        <taxon>Cyanophyceae</taxon>
        <taxon>Synechococcales</taxon>
        <taxon>Prochlorococcaceae</taxon>
        <taxon>Prochlorococcus</taxon>
    </lineage>
</organism>